<evidence type="ECO:0000255" key="1"/>
<evidence type="ECO:0000305" key="2"/>
<dbReference type="EMBL" id="AY358782">
    <property type="protein sequence ID" value="AAQ89142.1"/>
    <property type="molecule type" value="mRNA"/>
</dbReference>
<dbReference type="EMBL" id="CH471092">
    <property type="protein sequence ID" value="EAW83184.1"/>
    <property type="molecule type" value="Genomic_DNA"/>
</dbReference>
<dbReference type="EMBL" id="BC100863">
    <property type="protein sequence ID" value="AAI00864.1"/>
    <property type="molecule type" value="mRNA"/>
</dbReference>
<dbReference type="EMBL" id="BC100864">
    <property type="protein sequence ID" value="AAI00865.1"/>
    <property type="molecule type" value="mRNA"/>
</dbReference>
<dbReference type="EMBL" id="BC100865">
    <property type="protein sequence ID" value="AAI00866.1"/>
    <property type="molecule type" value="mRNA"/>
</dbReference>
<dbReference type="EMBL" id="BC100866">
    <property type="protein sequence ID" value="AAI00867.1"/>
    <property type="molecule type" value="mRNA"/>
</dbReference>
<dbReference type="CCDS" id="CCDS10850.1"/>
<dbReference type="RefSeq" id="NP_001335611.1">
    <property type="nucleotide sequence ID" value="NM_001348682.1"/>
</dbReference>
<dbReference type="RefSeq" id="NP_940845.1">
    <property type="nucleotide sequence ID" value="NM_198443.2"/>
</dbReference>
<dbReference type="SMR" id="Q496H8"/>
<dbReference type="BioGRID" id="125843">
    <property type="interactions" value="4"/>
</dbReference>
<dbReference type="FunCoup" id="Q496H8">
    <property type="interactions" value="153"/>
</dbReference>
<dbReference type="IntAct" id="Q496H8">
    <property type="interactions" value="2"/>
</dbReference>
<dbReference type="STRING" id="9606.ENSP00000342411"/>
<dbReference type="BioMuta" id="NRN1L"/>
<dbReference type="DMDM" id="172046108"/>
<dbReference type="PaxDb" id="9606-ENSP00000342411"/>
<dbReference type="PeptideAtlas" id="Q496H8"/>
<dbReference type="ProteomicsDB" id="61991"/>
<dbReference type="Antibodypedia" id="49763">
    <property type="antibodies" value="90 antibodies from 18 providers"/>
</dbReference>
<dbReference type="DNASU" id="123904"/>
<dbReference type="Ensembl" id="ENST00000339176.8">
    <property type="protein sequence ID" value="ENSP00000342411.3"/>
    <property type="gene ID" value="ENSG00000188038.8"/>
</dbReference>
<dbReference type="GeneID" id="123904"/>
<dbReference type="KEGG" id="hsa:123904"/>
<dbReference type="MANE-Select" id="ENST00000339176.8">
    <property type="protein sequence ID" value="ENSP00000342411.3"/>
    <property type="RefSeq nucleotide sequence ID" value="NM_198443.2"/>
    <property type="RefSeq protein sequence ID" value="NP_940845.1"/>
</dbReference>
<dbReference type="UCSC" id="uc002euu.4">
    <property type="organism name" value="human"/>
</dbReference>
<dbReference type="AGR" id="HGNC:29811"/>
<dbReference type="CTD" id="123904"/>
<dbReference type="DisGeNET" id="123904"/>
<dbReference type="GeneCards" id="NRN1L"/>
<dbReference type="HGNC" id="HGNC:29811">
    <property type="gene designation" value="NRN1L"/>
</dbReference>
<dbReference type="HPA" id="ENSG00000188038">
    <property type="expression patterns" value="Tissue enhanced (choroid)"/>
</dbReference>
<dbReference type="neXtProt" id="NX_Q496H8"/>
<dbReference type="PharmGKB" id="PA162398187"/>
<dbReference type="VEuPathDB" id="HostDB:ENSG00000188038"/>
<dbReference type="eggNOG" id="ENOG502S3XG">
    <property type="taxonomic scope" value="Eukaryota"/>
</dbReference>
<dbReference type="GeneTree" id="ENSGT00530000063853"/>
<dbReference type="HOGENOM" id="CLU_133886_0_0_1"/>
<dbReference type="InParanoid" id="Q496H8"/>
<dbReference type="OMA" id="HACASQV"/>
<dbReference type="OrthoDB" id="9929715at2759"/>
<dbReference type="PAN-GO" id="Q496H8">
    <property type="GO annotations" value="2 GO annotations based on evolutionary models"/>
</dbReference>
<dbReference type="PhylomeDB" id="Q496H8"/>
<dbReference type="TreeFam" id="TF332589"/>
<dbReference type="PathwayCommons" id="Q496H8"/>
<dbReference type="Reactome" id="R-HSA-163125">
    <property type="pathway name" value="Post-translational modification: synthesis of GPI-anchored proteins"/>
</dbReference>
<dbReference type="SignaLink" id="Q496H8"/>
<dbReference type="BioGRID-ORCS" id="123904">
    <property type="hits" value="15 hits in 1144 CRISPR screens"/>
</dbReference>
<dbReference type="GenomeRNAi" id="123904"/>
<dbReference type="Pharos" id="Q496H8">
    <property type="development level" value="Tdark"/>
</dbReference>
<dbReference type="PRO" id="PR:Q496H8"/>
<dbReference type="Proteomes" id="UP000005640">
    <property type="component" value="Chromosome 16"/>
</dbReference>
<dbReference type="RNAct" id="Q496H8">
    <property type="molecule type" value="protein"/>
</dbReference>
<dbReference type="Bgee" id="ENSG00000188038">
    <property type="expression patterns" value="Expressed in male germ line stem cell (sensu Vertebrata) in testis and 92 other cell types or tissues"/>
</dbReference>
<dbReference type="ExpressionAtlas" id="Q496H8">
    <property type="expression patterns" value="baseline and differential"/>
</dbReference>
<dbReference type="GO" id="GO:0030424">
    <property type="term" value="C:axon"/>
    <property type="evidence" value="ECO:0007669"/>
    <property type="project" value="Ensembl"/>
</dbReference>
<dbReference type="GO" id="GO:0005576">
    <property type="term" value="C:extracellular region"/>
    <property type="evidence" value="ECO:0000304"/>
    <property type="project" value="Reactome"/>
</dbReference>
<dbReference type="GO" id="GO:0005615">
    <property type="term" value="C:extracellular space"/>
    <property type="evidence" value="ECO:0007669"/>
    <property type="project" value="Ensembl"/>
</dbReference>
<dbReference type="GO" id="GO:0005886">
    <property type="term" value="C:plasma membrane"/>
    <property type="evidence" value="ECO:0000318"/>
    <property type="project" value="GO_Central"/>
</dbReference>
<dbReference type="GO" id="GO:0098552">
    <property type="term" value="C:side of membrane"/>
    <property type="evidence" value="ECO:0007669"/>
    <property type="project" value="UniProtKB-KW"/>
</dbReference>
<dbReference type="GO" id="GO:0042802">
    <property type="term" value="F:identical protein binding"/>
    <property type="evidence" value="ECO:0007669"/>
    <property type="project" value="Ensembl"/>
</dbReference>
<dbReference type="GO" id="GO:1990138">
    <property type="term" value="P:neuron projection extension"/>
    <property type="evidence" value="ECO:0000318"/>
    <property type="project" value="GO_Central"/>
</dbReference>
<dbReference type="InterPro" id="IPR026144">
    <property type="entry name" value="Neuritin_fam"/>
</dbReference>
<dbReference type="PANTHER" id="PTHR15902:SF2">
    <property type="entry name" value="NEURITIN-LIKE PROTEIN"/>
    <property type="match status" value="1"/>
</dbReference>
<dbReference type="PANTHER" id="PTHR15902">
    <property type="entry name" value="NEURITIN-RELATED"/>
    <property type="match status" value="1"/>
</dbReference>
<dbReference type="Pfam" id="PF15056">
    <property type="entry name" value="NRN1"/>
    <property type="match status" value="1"/>
</dbReference>
<organism>
    <name type="scientific">Homo sapiens</name>
    <name type="common">Human</name>
    <dbReference type="NCBI Taxonomy" id="9606"/>
    <lineage>
        <taxon>Eukaryota</taxon>
        <taxon>Metazoa</taxon>
        <taxon>Chordata</taxon>
        <taxon>Craniata</taxon>
        <taxon>Vertebrata</taxon>
        <taxon>Euteleostomi</taxon>
        <taxon>Mammalia</taxon>
        <taxon>Eutheria</taxon>
        <taxon>Euarchontoglires</taxon>
        <taxon>Primates</taxon>
        <taxon>Haplorrhini</taxon>
        <taxon>Catarrhini</taxon>
        <taxon>Hominidae</taxon>
        <taxon>Homo</taxon>
    </lineage>
</organism>
<sequence>MMRCCRRRCCCRQPPHALRPLLLLPLVLLPPLAAAAAGPNRCDTIYQGFAECLIRLGDSMGRGGELETICRSWNDFHACASQVLSGCPEEAAAVWESLQQEARQAPRPNNLHTLCGAPVHVRERGTGSETNQETLRATAPALPMAPAPPLLAAALALAYLLRPLA</sequence>
<name>NRN1L_HUMAN</name>
<feature type="signal peptide" evidence="1">
    <location>
        <begin position="1"/>
        <end position="35"/>
    </location>
</feature>
<feature type="chain" id="PRO_0000319429" description="Neuritin-like protein">
    <location>
        <begin position="36"/>
        <end position="139"/>
    </location>
</feature>
<feature type="propeptide" id="PRO_0000319430" description="Removed in mature form" evidence="1">
    <location>
        <begin position="140"/>
        <end position="165"/>
    </location>
</feature>
<feature type="lipid moiety-binding region" description="GPI-anchor amidated alanine" evidence="1">
    <location>
        <position position="139"/>
    </location>
</feature>
<reference key="1">
    <citation type="journal article" date="2003" name="Genome Res.">
        <title>The secreted protein discovery initiative (SPDI), a large-scale effort to identify novel human secreted and transmembrane proteins: a bioinformatics assessment.</title>
        <authorList>
            <person name="Clark H.F."/>
            <person name="Gurney A.L."/>
            <person name="Abaya E."/>
            <person name="Baker K."/>
            <person name="Baldwin D.T."/>
            <person name="Brush J."/>
            <person name="Chen J."/>
            <person name="Chow B."/>
            <person name="Chui C."/>
            <person name="Crowley C."/>
            <person name="Currell B."/>
            <person name="Deuel B."/>
            <person name="Dowd P."/>
            <person name="Eaton D."/>
            <person name="Foster J.S."/>
            <person name="Grimaldi C."/>
            <person name="Gu Q."/>
            <person name="Hass P.E."/>
            <person name="Heldens S."/>
            <person name="Huang A."/>
            <person name="Kim H.S."/>
            <person name="Klimowski L."/>
            <person name="Jin Y."/>
            <person name="Johnson S."/>
            <person name="Lee J."/>
            <person name="Lewis L."/>
            <person name="Liao D."/>
            <person name="Mark M.R."/>
            <person name="Robbie E."/>
            <person name="Sanchez C."/>
            <person name="Schoenfeld J."/>
            <person name="Seshagiri S."/>
            <person name="Simmons L."/>
            <person name="Singh J."/>
            <person name="Smith V."/>
            <person name="Stinson J."/>
            <person name="Vagts A."/>
            <person name="Vandlen R.L."/>
            <person name="Watanabe C."/>
            <person name="Wieand D."/>
            <person name="Woods K."/>
            <person name="Xie M.-H."/>
            <person name="Yansura D.G."/>
            <person name="Yi S."/>
            <person name="Yu G."/>
            <person name="Yuan J."/>
            <person name="Zhang M."/>
            <person name="Zhang Z."/>
            <person name="Goddard A.D."/>
            <person name="Wood W.I."/>
            <person name="Godowski P.J."/>
            <person name="Gray A.M."/>
        </authorList>
    </citation>
    <scope>NUCLEOTIDE SEQUENCE [LARGE SCALE MRNA]</scope>
</reference>
<reference key="2">
    <citation type="submission" date="2005-07" db="EMBL/GenBank/DDBJ databases">
        <authorList>
            <person name="Mural R.J."/>
            <person name="Istrail S."/>
            <person name="Sutton G.G."/>
            <person name="Florea L."/>
            <person name="Halpern A.L."/>
            <person name="Mobarry C.M."/>
            <person name="Lippert R."/>
            <person name="Walenz B."/>
            <person name="Shatkay H."/>
            <person name="Dew I."/>
            <person name="Miller J.R."/>
            <person name="Flanigan M.J."/>
            <person name="Edwards N.J."/>
            <person name="Bolanos R."/>
            <person name="Fasulo D."/>
            <person name="Halldorsson B.V."/>
            <person name="Hannenhalli S."/>
            <person name="Turner R."/>
            <person name="Yooseph S."/>
            <person name="Lu F."/>
            <person name="Nusskern D.R."/>
            <person name="Shue B.C."/>
            <person name="Zheng X.H."/>
            <person name="Zhong F."/>
            <person name="Delcher A.L."/>
            <person name="Huson D.H."/>
            <person name="Kravitz S.A."/>
            <person name="Mouchard L."/>
            <person name="Reinert K."/>
            <person name="Remington K.A."/>
            <person name="Clark A.G."/>
            <person name="Waterman M.S."/>
            <person name="Eichler E.E."/>
            <person name="Adams M.D."/>
            <person name="Hunkapiller M.W."/>
            <person name="Myers E.W."/>
            <person name="Venter J.C."/>
        </authorList>
    </citation>
    <scope>NUCLEOTIDE SEQUENCE [LARGE SCALE GENOMIC DNA]</scope>
</reference>
<reference key="3">
    <citation type="journal article" date="2004" name="Genome Res.">
        <title>The status, quality, and expansion of the NIH full-length cDNA project: the Mammalian Gene Collection (MGC).</title>
        <authorList>
            <consortium name="The MGC Project Team"/>
        </authorList>
    </citation>
    <scope>NUCLEOTIDE SEQUENCE [LARGE SCALE MRNA]</scope>
</reference>
<keyword id="KW-1003">Cell membrane</keyword>
<keyword id="KW-0325">Glycoprotein</keyword>
<keyword id="KW-0336">GPI-anchor</keyword>
<keyword id="KW-0449">Lipoprotein</keyword>
<keyword id="KW-0472">Membrane</keyword>
<keyword id="KW-1267">Proteomics identification</keyword>
<keyword id="KW-1185">Reference proteome</keyword>
<keyword id="KW-0732">Signal</keyword>
<accession>Q496H8</accession>
<accession>Q6UWH7</accession>
<protein>
    <recommendedName>
        <fullName>Neuritin-like protein</fullName>
    </recommendedName>
</protein>
<proteinExistence type="evidence at protein level"/>
<gene>
    <name type="primary">NRN1L</name>
    <name type="ORF">UNQ2446/PRO5725</name>
</gene>
<comment type="interaction">
    <interactant intactId="EBI-13079132">
        <id>Q496H8</id>
    </interactant>
    <interactant intactId="EBI-947187">
        <id>Q9UHD9</id>
        <label>UBQLN2</label>
    </interactant>
    <organismsDiffer>false</organismsDiffer>
    <experiments>3</experiments>
</comment>
<comment type="subcellular location">
    <subcellularLocation>
        <location evidence="2">Cell membrane</location>
        <topology evidence="2">Lipid-anchor</topology>
        <topology evidence="2">GPI-anchor</topology>
    </subcellularLocation>
</comment>
<comment type="similarity">
    <text evidence="2">Belongs to the neuritin family.</text>
</comment>